<evidence type="ECO:0000255" key="1">
    <source>
        <dbReference type="HAMAP-Rule" id="MF_00127"/>
    </source>
</evidence>
<gene>
    <name evidence="1" type="primary">hisS</name>
    <name type="ordered locus">Hore_12150</name>
</gene>
<organism>
    <name type="scientific">Halothermothrix orenii (strain H 168 / OCM 544 / DSM 9562)</name>
    <dbReference type="NCBI Taxonomy" id="373903"/>
    <lineage>
        <taxon>Bacteria</taxon>
        <taxon>Bacillati</taxon>
        <taxon>Bacillota</taxon>
        <taxon>Clostridia</taxon>
        <taxon>Halanaerobiales</taxon>
        <taxon>Halothermotrichaceae</taxon>
        <taxon>Halothermothrix</taxon>
    </lineage>
</organism>
<reference key="1">
    <citation type="journal article" date="2009" name="PLoS ONE">
        <title>Genome analysis of the anaerobic thermohalophilic bacterium Halothermothrix orenii.</title>
        <authorList>
            <person name="Mavromatis K."/>
            <person name="Ivanova N."/>
            <person name="Anderson I."/>
            <person name="Lykidis A."/>
            <person name="Hooper S.D."/>
            <person name="Sun H."/>
            <person name="Kunin V."/>
            <person name="Lapidus A."/>
            <person name="Hugenholtz P."/>
            <person name="Patel B."/>
            <person name="Kyrpides N.C."/>
        </authorList>
    </citation>
    <scope>NUCLEOTIDE SEQUENCE [LARGE SCALE GENOMIC DNA]</scope>
    <source>
        <strain>H 168 / OCM 544 / DSM 9562</strain>
    </source>
</reference>
<keyword id="KW-0030">Aminoacyl-tRNA synthetase</keyword>
<keyword id="KW-0067">ATP-binding</keyword>
<keyword id="KW-0963">Cytoplasm</keyword>
<keyword id="KW-0436">Ligase</keyword>
<keyword id="KW-0547">Nucleotide-binding</keyword>
<keyword id="KW-0648">Protein biosynthesis</keyword>
<keyword id="KW-1185">Reference proteome</keyword>
<name>SYH_HALOH</name>
<protein>
    <recommendedName>
        <fullName evidence="1">Histidine--tRNA ligase</fullName>
        <ecNumber evidence="1">6.1.1.21</ecNumber>
    </recommendedName>
    <alternativeName>
        <fullName evidence="1">Histidyl-tRNA synthetase</fullName>
        <shortName evidence="1">HisRS</shortName>
    </alternativeName>
</protein>
<sequence length="419" mass="47685">MDVKAPRGTNDILPPVSLKWQYIEDTARRIFQMYNYKEIRTPIFEYTELFQRGIGETTDIVEKEMYTFEDKGGRSITLRPEGTASVVRAFLEHKIYGQVQPTKYFYIGPMFRYERPQAGRFRQFHQLGVEAFGSNDPALDAEVIALGLDILKRLGLTDVEVFINSIGCPECRARYSDELKQYLESHQDRLCKDCKARLNKNPLRILDCKNEECSLVIKNAPKILDYLCDNCRVHFEDVQEYLDLLGIKYRVDPTLVRGLDYYTNTAFEIKFKELGAQDAIFGGGRYNGLTEEIGNKSIPGIGFAVGIERLILALDKKGIKLPVNDSIDVYLVTIGERAKRAAFNYTYLLRESGITAEIDYLGRSIKSQMKSADRTGASYTIIIGDSELDSGKATVKNMRTGEQVEIMLANLIEEMQKLV</sequence>
<feature type="chain" id="PRO_1000199138" description="Histidine--tRNA ligase">
    <location>
        <begin position="1"/>
        <end position="419"/>
    </location>
</feature>
<comment type="catalytic activity">
    <reaction evidence="1">
        <text>tRNA(His) + L-histidine + ATP = L-histidyl-tRNA(His) + AMP + diphosphate + H(+)</text>
        <dbReference type="Rhea" id="RHEA:17313"/>
        <dbReference type="Rhea" id="RHEA-COMP:9665"/>
        <dbReference type="Rhea" id="RHEA-COMP:9689"/>
        <dbReference type="ChEBI" id="CHEBI:15378"/>
        <dbReference type="ChEBI" id="CHEBI:30616"/>
        <dbReference type="ChEBI" id="CHEBI:33019"/>
        <dbReference type="ChEBI" id="CHEBI:57595"/>
        <dbReference type="ChEBI" id="CHEBI:78442"/>
        <dbReference type="ChEBI" id="CHEBI:78527"/>
        <dbReference type="ChEBI" id="CHEBI:456215"/>
        <dbReference type="EC" id="6.1.1.21"/>
    </reaction>
</comment>
<comment type="subunit">
    <text evidence="1">Homodimer.</text>
</comment>
<comment type="subcellular location">
    <subcellularLocation>
        <location evidence="1">Cytoplasm</location>
    </subcellularLocation>
</comment>
<comment type="similarity">
    <text evidence="1">Belongs to the class-II aminoacyl-tRNA synthetase family.</text>
</comment>
<proteinExistence type="inferred from homology"/>
<accession>B8CXE6</accession>
<dbReference type="EC" id="6.1.1.21" evidence="1"/>
<dbReference type="EMBL" id="CP001098">
    <property type="protein sequence ID" value="ACL69965.1"/>
    <property type="molecule type" value="Genomic_DNA"/>
</dbReference>
<dbReference type="RefSeq" id="WP_012636149.1">
    <property type="nucleotide sequence ID" value="NC_011899.1"/>
</dbReference>
<dbReference type="SMR" id="B8CXE6"/>
<dbReference type="STRING" id="373903.Hore_12150"/>
<dbReference type="KEGG" id="hor:Hore_12150"/>
<dbReference type="eggNOG" id="COG0124">
    <property type="taxonomic scope" value="Bacteria"/>
</dbReference>
<dbReference type="HOGENOM" id="CLU_025113_1_1_9"/>
<dbReference type="OrthoDB" id="9800814at2"/>
<dbReference type="Proteomes" id="UP000000719">
    <property type="component" value="Chromosome"/>
</dbReference>
<dbReference type="GO" id="GO:0005737">
    <property type="term" value="C:cytoplasm"/>
    <property type="evidence" value="ECO:0007669"/>
    <property type="project" value="UniProtKB-SubCell"/>
</dbReference>
<dbReference type="GO" id="GO:0005524">
    <property type="term" value="F:ATP binding"/>
    <property type="evidence" value="ECO:0007669"/>
    <property type="project" value="UniProtKB-UniRule"/>
</dbReference>
<dbReference type="GO" id="GO:0140096">
    <property type="term" value="F:catalytic activity, acting on a protein"/>
    <property type="evidence" value="ECO:0007669"/>
    <property type="project" value="UniProtKB-ARBA"/>
</dbReference>
<dbReference type="GO" id="GO:0004821">
    <property type="term" value="F:histidine-tRNA ligase activity"/>
    <property type="evidence" value="ECO:0007669"/>
    <property type="project" value="UniProtKB-UniRule"/>
</dbReference>
<dbReference type="GO" id="GO:0016740">
    <property type="term" value="F:transferase activity"/>
    <property type="evidence" value="ECO:0007669"/>
    <property type="project" value="UniProtKB-ARBA"/>
</dbReference>
<dbReference type="GO" id="GO:0006427">
    <property type="term" value="P:histidyl-tRNA aminoacylation"/>
    <property type="evidence" value="ECO:0007669"/>
    <property type="project" value="UniProtKB-UniRule"/>
</dbReference>
<dbReference type="CDD" id="cd00773">
    <property type="entry name" value="HisRS-like_core"/>
    <property type="match status" value="1"/>
</dbReference>
<dbReference type="CDD" id="cd00859">
    <property type="entry name" value="HisRS_anticodon"/>
    <property type="match status" value="1"/>
</dbReference>
<dbReference type="FunFam" id="3.30.930.10:FF:000005">
    <property type="entry name" value="Histidine--tRNA ligase"/>
    <property type="match status" value="1"/>
</dbReference>
<dbReference type="Gene3D" id="3.40.50.800">
    <property type="entry name" value="Anticodon-binding domain"/>
    <property type="match status" value="1"/>
</dbReference>
<dbReference type="Gene3D" id="3.30.930.10">
    <property type="entry name" value="Bira Bifunctional Protein, Domain 2"/>
    <property type="match status" value="1"/>
</dbReference>
<dbReference type="HAMAP" id="MF_00127">
    <property type="entry name" value="His_tRNA_synth"/>
    <property type="match status" value="1"/>
</dbReference>
<dbReference type="InterPro" id="IPR006195">
    <property type="entry name" value="aa-tRNA-synth_II"/>
</dbReference>
<dbReference type="InterPro" id="IPR045864">
    <property type="entry name" value="aa-tRNA-synth_II/BPL/LPL"/>
</dbReference>
<dbReference type="InterPro" id="IPR004154">
    <property type="entry name" value="Anticodon-bd"/>
</dbReference>
<dbReference type="InterPro" id="IPR036621">
    <property type="entry name" value="Anticodon-bd_dom_sf"/>
</dbReference>
<dbReference type="InterPro" id="IPR015807">
    <property type="entry name" value="His-tRNA-ligase"/>
</dbReference>
<dbReference type="InterPro" id="IPR041715">
    <property type="entry name" value="HisRS-like_core"/>
</dbReference>
<dbReference type="InterPro" id="IPR004516">
    <property type="entry name" value="HisRS/HisZ"/>
</dbReference>
<dbReference type="InterPro" id="IPR033656">
    <property type="entry name" value="HisRS_anticodon"/>
</dbReference>
<dbReference type="NCBIfam" id="TIGR00442">
    <property type="entry name" value="hisS"/>
    <property type="match status" value="1"/>
</dbReference>
<dbReference type="PANTHER" id="PTHR43707:SF1">
    <property type="entry name" value="HISTIDINE--TRNA LIGASE, MITOCHONDRIAL-RELATED"/>
    <property type="match status" value="1"/>
</dbReference>
<dbReference type="PANTHER" id="PTHR43707">
    <property type="entry name" value="HISTIDYL-TRNA SYNTHETASE"/>
    <property type="match status" value="1"/>
</dbReference>
<dbReference type="Pfam" id="PF03129">
    <property type="entry name" value="HGTP_anticodon"/>
    <property type="match status" value="1"/>
</dbReference>
<dbReference type="Pfam" id="PF13393">
    <property type="entry name" value="tRNA-synt_His"/>
    <property type="match status" value="1"/>
</dbReference>
<dbReference type="PIRSF" id="PIRSF001549">
    <property type="entry name" value="His-tRNA_synth"/>
    <property type="match status" value="1"/>
</dbReference>
<dbReference type="SUPFAM" id="SSF52954">
    <property type="entry name" value="Class II aaRS ABD-related"/>
    <property type="match status" value="1"/>
</dbReference>
<dbReference type="SUPFAM" id="SSF55681">
    <property type="entry name" value="Class II aaRS and biotin synthetases"/>
    <property type="match status" value="1"/>
</dbReference>
<dbReference type="PROSITE" id="PS50862">
    <property type="entry name" value="AA_TRNA_LIGASE_II"/>
    <property type="match status" value="1"/>
</dbReference>